<gene>
    <name type="primary">RPS12</name>
</gene>
<reference key="1">
    <citation type="journal article" date="1994" name="Mol. Cell. Biol.">
        <title>RNA editing and mitochondrial genomic organization in the cryptobiid kinetoplastid protozoan Trypanoplasma borreli.</title>
        <authorList>
            <person name="Maslov D.A."/>
            <person name="Simpson L."/>
        </authorList>
    </citation>
    <scope>NUCLEOTIDE SEQUENCE [MRNA]</scope>
    <scope>RNA EDITING</scope>
    <source>
        <strain>PG-JH</strain>
    </source>
</reference>
<dbReference type="EMBL" id="U14183">
    <property type="protein sequence ID" value="AAC13775.1"/>
    <property type="molecule type" value="mRNA"/>
</dbReference>
<dbReference type="GO" id="GO:0020023">
    <property type="term" value="C:kinetoplast"/>
    <property type="evidence" value="ECO:0007669"/>
    <property type="project" value="UniProtKB-SubCell"/>
</dbReference>
<dbReference type="GO" id="GO:1990904">
    <property type="term" value="C:ribonucleoprotein complex"/>
    <property type="evidence" value="ECO:0007669"/>
    <property type="project" value="UniProtKB-KW"/>
</dbReference>
<dbReference type="GO" id="GO:0005840">
    <property type="term" value="C:ribosome"/>
    <property type="evidence" value="ECO:0007669"/>
    <property type="project" value="UniProtKB-KW"/>
</dbReference>
<dbReference type="InterPro" id="IPR035306">
    <property type="entry name" value="Ribosomal_uS12m"/>
</dbReference>
<dbReference type="Pfam" id="PF17487">
    <property type="entry name" value="Ribosomal_S12"/>
    <property type="match status" value="1"/>
</dbReference>
<evidence type="ECO:0000269" key="1">
    <source>
    </source>
</evidence>
<evidence type="ECO:0000305" key="2"/>
<organism>
    <name type="scientific">Trypanoplasma borreli</name>
    <dbReference type="NCBI Taxonomy" id="5710"/>
    <lineage>
        <taxon>Eukaryota</taxon>
        <taxon>Discoba</taxon>
        <taxon>Euglenozoa</taxon>
        <taxon>Kinetoplastea</taxon>
        <taxon>Metakinetoplastina</taxon>
        <taxon>Parabodonida</taxon>
        <taxon>Trypanoplasma</taxon>
    </lineage>
</organism>
<accession>Q33569</accession>
<name>RT12_TRYBO</name>
<keyword id="KW-0419">Kinetoplast</keyword>
<keyword id="KW-0496">Mitochondrion</keyword>
<keyword id="KW-0687">Ribonucleoprotein</keyword>
<keyword id="KW-0689">Ribosomal protein</keyword>
<keyword id="KW-0691">RNA editing</keyword>
<comment type="function">
    <text>Protein S12 is involved in the translation initiation step.</text>
</comment>
<comment type="subcellular location">
    <subcellularLocation>
        <location>Mitochondrion matrix</location>
        <location>Kinetoplast</location>
    </subcellularLocation>
</comment>
<comment type="RNA editing" locationType="Not_applicable">
    <text evidence="1">Some positions are modified by RNA editing via nucleotide insertion and deletion. 133 U's are added and 32 U's are deleted at 66 sites.</text>
</comment>
<comment type="similarity">
    <text evidence="2">Belongs to the universal ribosomal protein uS12 family.</text>
</comment>
<sequence>MLFYCVLLYGLCLRFLLFSFRYFMCPRLPSSGNRMIGCLLLLLFYSFWLLRCFFIFFLVSCFIYVVEGGGFIDLPSLRYFTRLFYFV</sequence>
<proteinExistence type="evidence at transcript level"/>
<geneLocation type="mitochondrion"/>
<protein>
    <recommendedName>
        <fullName evidence="2">Small ribosomal subunit protein uS12m</fullName>
    </recommendedName>
    <alternativeName>
        <fullName>Ribosomal protein S12, mitochondrial</fullName>
    </alternativeName>
</protein>
<feature type="chain" id="PRO_0000146455" description="Small ribosomal subunit protein uS12m">
    <location>
        <begin position="1"/>
        <end position="87"/>
    </location>
</feature>